<name>PEPD_HUMAN</name>
<sequence>MAAATGPSFWLGNETLKVPLALFALNRQRLCERLRKNPAVQAGSIVVLQGGEETQRYCTDTGVLFRQESFFHWAFGVTEPGCYGVIDVDTGKSTLFVPRLPASHATWMGKIHSKEHFKEKYAVDDVQYVDEIASVLTSQKPSVLLTLRGVNTDSGSVCREASFDGISKFEVNNTILHPEIVECRVFKTDMELEVLRYTNKISSEAHREVMKAVKVGMKEYELESLFEHYCYSRGGMRHSSYTCICGSGENSAVLHYGHAGAPNDRTIQNGDMCLFDMGGEYYCFASDITCSFPANGKFTADQKAVYEAVLRSSRAVMGAMKPGVWWPDMHRLADRIHLEELAHMGILSGSVDAMVQAHLGAVFMPHGLGHFLGIDVHDVGGYPEGVERIDEPGLRSLRTARHLQPGMVLTVEPGIYFIDHLLDEALADPARASFLNREVLQRFRGFGGVRIEEDVVVTDSGIELLTCVPRTVEEIEACMAGCDKAFTPFSGPK</sequence>
<evidence type="ECO:0000269" key="1">
    <source>
    </source>
</evidence>
<evidence type="ECO:0000269" key="2">
    <source>
    </source>
</evidence>
<evidence type="ECO:0000269" key="3">
    <source>
    </source>
</evidence>
<evidence type="ECO:0000269" key="4">
    <source>
    </source>
</evidence>
<evidence type="ECO:0000269" key="5">
    <source>
    </source>
</evidence>
<evidence type="ECO:0000269" key="6">
    <source>
    </source>
</evidence>
<evidence type="ECO:0000269" key="7">
    <source>
    </source>
</evidence>
<evidence type="ECO:0000269" key="8">
    <source>
    </source>
</evidence>
<evidence type="ECO:0000269" key="9">
    <source>
    </source>
</evidence>
<evidence type="ECO:0000269" key="10">
    <source>
    </source>
</evidence>
<evidence type="ECO:0000269" key="11">
    <source>
    </source>
</evidence>
<evidence type="ECO:0000269" key="12">
    <source ref="13"/>
</evidence>
<evidence type="ECO:0000303" key="13">
    <source>
    </source>
</evidence>
<evidence type="ECO:0000303" key="14">
    <source>
    </source>
</evidence>
<evidence type="ECO:0000303" key="15">
    <source>
    </source>
</evidence>
<evidence type="ECO:0000305" key="16"/>
<evidence type="ECO:0000312" key="17">
    <source>
        <dbReference type="HGNC" id="HGNC:8840"/>
    </source>
</evidence>
<evidence type="ECO:0007744" key="18">
    <source>
        <dbReference type="PDB" id="5M4G"/>
    </source>
</evidence>
<evidence type="ECO:0007744" key="19">
    <source>
        <dbReference type="PDB" id="5M4J"/>
    </source>
</evidence>
<evidence type="ECO:0007744" key="20">
    <source>
        <dbReference type="PDB" id="5M4L"/>
    </source>
</evidence>
<evidence type="ECO:0007744" key="21">
    <source>
        <dbReference type="PDB" id="5M4Q"/>
    </source>
</evidence>
<evidence type="ECO:0007744" key="22">
    <source>
    </source>
</evidence>
<evidence type="ECO:0007744" key="23">
    <source>
    </source>
</evidence>
<evidence type="ECO:0007744" key="24">
    <source>
    </source>
</evidence>
<evidence type="ECO:0007829" key="25">
    <source>
        <dbReference type="PDB" id="5M4L"/>
    </source>
</evidence>
<evidence type="ECO:0007829" key="26">
    <source>
        <dbReference type="PDB" id="5MC0"/>
    </source>
</evidence>
<evidence type="ECO:0007829" key="27">
    <source>
        <dbReference type="PDB" id="5MC1"/>
    </source>
</evidence>
<evidence type="ECO:0007829" key="28">
    <source>
        <dbReference type="PDB" id="6SRE"/>
    </source>
</evidence>
<accession>P12955</accession>
<accession>A8K3Z1</accession>
<accession>A8K416</accession>
<accession>A8K696</accession>
<accession>A8MX47</accession>
<accession>B4DDB7</accession>
<accession>B4DGJ1</accession>
<accession>E9PCE8</accession>
<accession>Q8TBN9</accession>
<accession>Q9BT75</accession>
<proteinExistence type="evidence at protein level"/>
<organism>
    <name type="scientific">Homo sapiens</name>
    <name type="common">Human</name>
    <dbReference type="NCBI Taxonomy" id="9606"/>
    <lineage>
        <taxon>Eukaryota</taxon>
        <taxon>Metazoa</taxon>
        <taxon>Chordata</taxon>
        <taxon>Craniata</taxon>
        <taxon>Vertebrata</taxon>
        <taxon>Euteleostomi</taxon>
        <taxon>Mammalia</taxon>
        <taxon>Eutheria</taxon>
        <taxon>Euarchontoglires</taxon>
        <taxon>Primates</taxon>
        <taxon>Haplorrhini</taxon>
        <taxon>Catarrhini</taxon>
        <taxon>Hominidae</taxon>
        <taxon>Homo</taxon>
    </lineage>
</organism>
<reference key="1">
    <citation type="journal article" date="1989" name="J. Biol. Chem.">
        <title>Primary structure and gene localization of human prolidase.</title>
        <authorList>
            <person name="Endo F."/>
            <person name="Tanoue A."/>
            <person name="Nakai H."/>
            <person name="Hata A."/>
            <person name="Indo Y."/>
            <person name="Titani K."/>
            <person name="Matsuda I."/>
        </authorList>
    </citation>
    <scope>NUCLEOTIDE SEQUENCE [MRNA] (ISOFORM 1)</scope>
    <scope>PARTIAL PROTEIN SEQUENCE</scope>
    <scope>FUNCTION</scope>
    <source>
        <tissue>Liver</tissue>
        <tissue>Placenta</tissue>
    </source>
</reference>
<reference key="2">
    <citation type="submission" date="2003-05" db="EMBL/GenBank/DDBJ databases">
        <title>Cloning of human full-length CDSs in BD Creator(TM) system donor vector.</title>
        <authorList>
            <person name="Kalnine N."/>
            <person name="Chen X."/>
            <person name="Rolfs A."/>
            <person name="Halleck A."/>
            <person name="Hines L."/>
            <person name="Eisenstein S."/>
            <person name="Koundinya M."/>
            <person name="Raphael J."/>
            <person name="Moreira D."/>
            <person name="Kelley T."/>
            <person name="LaBaer J."/>
            <person name="Lin Y."/>
            <person name="Phelan M."/>
            <person name="Farmer A."/>
        </authorList>
    </citation>
    <scope>NUCLEOTIDE SEQUENCE [LARGE SCALE MRNA] (ISOFORM 1)</scope>
</reference>
<reference key="3">
    <citation type="journal article" date="2004" name="Nat. Genet.">
        <title>Complete sequencing and characterization of 21,243 full-length human cDNAs.</title>
        <authorList>
            <person name="Ota T."/>
            <person name="Suzuki Y."/>
            <person name="Nishikawa T."/>
            <person name="Otsuki T."/>
            <person name="Sugiyama T."/>
            <person name="Irie R."/>
            <person name="Wakamatsu A."/>
            <person name="Hayashi K."/>
            <person name="Sato H."/>
            <person name="Nagai K."/>
            <person name="Kimura K."/>
            <person name="Makita H."/>
            <person name="Sekine M."/>
            <person name="Obayashi M."/>
            <person name="Nishi T."/>
            <person name="Shibahara T."/>
            <person name="Tanaka T."/>
            <person name="Ishii S."/>
            <person name="Yamamoto J."/>
            <person name="Saito K."/>
            <person name="Kawai Y."/>
            <person name="Isono Y."/>
            <person name="Nakamura Y."/>
            <person name="Nagahari K."/>
            <person name="Murakami K."/>
            <person name="Yasuda T."/>
            <person name="Iwayanagi T."/>
            <person name="Wagatsuma M."/>
            <person name="Shiratori A."/>
            <person name="Sudo H."/>
            <person name="Hosoiri T."/>
            <person name="Kaku Y."/>
            <person name="Kodaira H."/>
            <person name="Kondo H."/>
            <person name="Sugawara M."/>
            <person name="Takahashi M."/>
            <person name="Kanda K."/>
            <person name="Yokoi T."/>
            <person name="Furuya T."/>
            <person name="Kikkawa E."/>
            <person name="Omura Y."/>
            <person name="Abe K."/>
            <person name="Kamihara K."/>
            <person name="Katsuta N."/>
            <person name="Sato K."/>
            <person name="Tanikawa M."/>
            <person name="Yamazaki M."/>
            <person name="Ninomiya K."/>
            <person name="Ishibashi T."/>
            <person name="Yamashita H."/>
            <person name="Murakawa K."/>
            <person name="Fujimori K."/>
            <person name="Tanai H."/>
            <person name="Kimata M."/>
            <person name="Watanabe M."/>
            <person name="Hiraoka S."/>
            <person name="Chiba Y."/>
            <person name="Ishida S."/>
            <person name="Ono Y."/>
            <person name="Takiguchi S."/>
            <person name="Watanabe S."/>
            <person name="Yosida M."/>
            <person name="Hotuta T."/>
            <person name="Kusano J."/>
            <person name="Kanehori K."/>
            <person name="Takahashi-Fujii A."/>
            <person name="Hara H."/>
            <person name="Tanase T.-O."/>
            <person name="Nomura Y."/>
            <person name="Togiya S."/>
            <person name="Komai F."/>
            <person name="Hara R."/>
            <person name="Takeuchi K."/>
            <person name="Arita M."/>
            <person name="Imose N."/>
            <person name="Musashino K."/>
            <person name="Yuuki H."/>
            <person name="Oshima A."/>
            <person name="Sasaki N."/>
            <person name="Aotsuka S."/>
            <person name="Yoshikawa Y."/>
            <person name="Matsunawa H."/>
            <person name="Ichihara T."/>
            <person name="Shiohata N."/>
            <person name="Sano S."/>
            <person name="Moriya S."/>
            <person name="Momiyama H."/>
            <person name="Satoh N."/>
            <person name="Takami S."/>
            <person name="Terashima Y."/>
            <person name="Suzuki O."/>
            <person name="Nakagawa S."/>
            <person name="Senoh A."/>
            <person name="Mizoguchi H."/>
            <person name="Goto Y."/>
            <person name="Shimizu F."/>
            <person name="Wakebe H."/>
            <person name="Hishigaki H."/>
            <person name="Watanabe T."/>
            <person name="Sugiyama A."/>
            <person name="Takemoto M."/>
            <person name="Kawakami B."/>
            <person name="Yamazaki M."/>
            <person name="Watanabe K."/>
            <person name="Kumagai A."/>
            <person name="Itakura S."/>
            <person name="Fukuzumi Y."/>
            <person name="Fujimori Y."/>
            <person name="Komiyama M."/>
            <person name="Tashiro H."/>
            <person name="Tanigami A."/>
            <person name="Fujiwara T."/>
            <person name="Ono T."/>
            <person name="Yamada K."/>
            <person name="Fujii Y."/>
            <person name="Ozaki K."/>
            <person name="Hirao M."/>
            <person name="Ohmori Y."/>
            <person name="Kawabata A."/>
            <person name="Hikiji T."/>
            <person name="Kobatake N."/>
            <person name="Inagaki H."/>
            <person name="Ikema Y."/>
            <person name="Okamoto S."/>
            <person name="Okitani R."/>
            <person name="Kawakami T."/>
            <person name="Noguchi S."/>
            <person name="Itoh T."/>
            <person name="Shigeta K."/>
            <person name="Senba T."/>
            <person name="Matsumura K."/>
            <person name="Nakajima Y."/>
            <person name="Mizuno T."/>
            <person name="Morinaga M."/>
            <person name="Sasaki M."/>
            <person name="Togashi T."/>
            <person name="Oyama M."/>
            <person name="Hata H."/>
            <person name="Watanabe M."/>
            <person name="Komatsu T."/>
            <person name="Mizushima-Sugano J."/>
            <person name="Satoh T."/>
            <person name="Shirai Y."/>
            <person name="Takahashi Y."/>
            <person name="Nakagawa K."/>
            <person name="Okumura K."/>
            <person name="Nagase T."/>
            <person name="Nomura N."/>
            <person name="Kikuchi H."/>
            <person name="Masuho Y."/>
            <person name="Yamashita R."/>
            <person name="Nakai K."/>
            <person name="Yada T."/>
            <person name="Nakamura Y."/>
            <person name="Ohara O."/>
            <person name="Isogai T."/>
            <person name="Sugano S."/>
        </authorList>
    </citation>
    <scope>NUCLEOTIDE SEQUENCE [LARGE SCALE MRNA] (ISOFORMS 1; 2 AND 3)</scope>
    <scope>VARIANT PHE-435</scope>
    <source>
        <tissue>Brain</tissue>
        <tissue>Kidney</tissue>
    </source>
</reference>
<reference key="4">
    <citation type="journal article" date="2004" name="Nature">
        <title>The DNA sequence and biology of human chromosome 19.</title>
        <authorList>
            <person name="Grimwood J."/>
            <person name="Gordon L.A."/>
            <person name="Olsen A.S."/>
            <person name="Terry A."/>
            <person name="Schmutz J."/>
            <person name="Lamerdin J.E."/>
            <person name="Hellsten U."/>
            <person name="Goodstein D."/>
            <person name="Couronne O."/>
            <person name="Tran-Gyamfi M."/>
            <person name="Aerts A."/>
            <person name="Altherr M."/>
            <person name="Ashworth L."/>
            <person name="Bajorek E."/>
            <person name="Black S."/>
            <person name="Branscomb E."/>
            <person name="Caenepeel S."/>
            <person name="Carrano A.V."/>
            <person name="Caoile C."/>
            <person name="Chan Y.M."/>
            <person name="Christensen M."/>
            <person name="Cleland C.A."/>
            <person name="Copeland A."/>
            <person name="Dalin E."/>
            <person name="Dehal P."/>
            <person name="Denys M."/>
            <person name="Detter J.C."/>
            <person name="Escobar J."/>
            <person name="Flowers D."/>
            <person name="Fotopulos D."/>
            <person name="Garcia C."/>
            <person name="Georgescu A.M."/>
            <person name="Glavina T."/>
            <person name="Gomez M."/>
            <person name="Gonzales E."/>
            <person name="Groza M."/>
            <person name="Hammon N."/>
            <person name="Hawkins T."/>
            <person name="Haydu L."/>
            <person name="Ho I."/>
            <person name="Huang W."/>
            <person name="Israni S."/>
            <person name="Jett J."/>
            <person name="Kadner K."/>
            <person name="Kimball H."/>
            <person name="Kobayashi A."/>
            <person name="Larionov V."/>
            <person name="Leem S.-H."/>
            <person name="Lopez F."/>
            <person name="Lou Y."/>
            <person name="Lowry S."/>
            <person name="Malfatti S."/>
            <person name="Martinez D."/>
            <person name="McCready P.M."/>
            <person name="Medina C."/>
            <person name="Morgan J."/>
            <person name="Nelson K."/>
            <person name="Nolan M."/>
            <person name="Ovcharenko I."/>
            <person name="Pitluck S."/>
            <person name="Pollard M."/>
            <person name="Popkie A.P."/>
            <person name="Predki P."/>
            <person name="Quan G."/>
            <person name="Ramirez L."/>
            <person name="Rash S."/>
            <person name="Retterer J."/>
            <person name="Rodriguez A."/>
            <person name="Rogers S."/>
            <person name="Salamov A."/>
            <person name="Salazar A."/>
            <person name="She X."/>
            <person name="Smith D."/>
            <person name="Slezak T."/>
            <person name="Solovyev V."/>
            <person name="Thayer N."/>
            <person name="Tice H."/>
            <person name="Tsai M."/>
            <person name="Ustaszewska A."/>
            <person name="Vo N."/>
            <person name="Wagner M."/>
            <person name="Wheeler J."/>
            <person name="Wu K."/>
            <person name="Xie G."/>
            <person name="Yang J."/>
            <person name="Dubchak I."/>
            <person name="Furey T.S."/>
            <person name="DeJong P."/>
            <person name="Dickson M."/>
            <person name="Gordon D."/>
            <person name="Eichler E.E."/>
            <person name="Pennacchio L.A."/>
            <person name="Richardson P."/>
            <person name="Stubbs L."/>
            <person name="Rokhsar D.S."/>
            <person name="Myers R.M."/>
            <person name="Rubin E.M."/>
            <person name="Lucas S.M."/>
        </authorList>
    </citation>
    <scope>NUCLEOTIDE SEQUENCE [LARGE SCALE GENOMIC DNA]</scope>
</reference>
<reference key="5">
    <citation type="journal article" date="2004" name="Genome Res.">
        <title>The status, quality, and expansion of the NIH full-length cDNA project: the Mammalian Gene Collection (MGC).</title>
        <authorList>
            <consortium name="The MGC Project Team"/>
        </authorList>
    </citation>
    <scope>NUCLEOTIDE SEQUENCE [LARGE SCALE MRNA] (ISOFORM 1)</scope>
    <scope>VARIANT PHE-435</scope>
    <source>
        <tissue>Kidney</tissue>
        <tissue>Skin</tissue>
        <tissue>Uterus</tissue>
    </source>
</reference>
<reference key="6">
    <citation type="journal article" date="2002" name="Proteomics">
        <title>Cluster analysis of an extensive human breast cancer cell line protein expression map database.</title>
        <authorList>
            <person name="Harris R.A."/>
            <person name="Yang A."/>
            <person name="Stein R.C."/>
            <person name="Lucy K."/>
            <person name="Brusten L."/>
            <person name="Herath A."/>
            <person name="Parekh R."/>
            <person name="Waterfield M.D."/>
            <person name="O'Hare M.J."/>
            <person name="Neville M.A."/>
            <person name="Page M.J."/>
            <person name="Zvelebil M.J."/>
        </authorList>
    </citation>
    <scope>MASS SPECTROMETRY</scope>
    <source>
        <tissue>Mammary cancer</tissue>
    </source>
</reference>
<reference key="7">
    <citation type="journal article" date="2006" name="FEBS J.">
        <title>Human recombinant prolidase from eukaryotic and prokaryotic sources. Expression, purification, characterization and long-term stability studies.</title>
        <authorList>
            <person name="Lupi A."/>
            <person name="Della Torre S."/>
            <person name="Campari E."/>
            <person name="Tenni R."/>
            <person name="Cetta G."/>
            <person name="Rossi A."/>
            <person name="Forlino A."/>
        </authorList>
    </citation>
    <scope>FUNCTION</scope>
    <scope>CATALYTIC ACTIVITY</scope>
    <scope>COFACTOR</scope>
</reference>
<reference key="8">
    <citation type="journal article" date="2009" name="Anal. Chem.">
        <title>Lys-N and trypsin cover complementary parts of the phosphoproteome in a refined SCX-based approach.</title>
        <authorList>
            <person name="Gauci S."/>
            <person name="Helbig A.O."/>
            <person name="Slijper M."/>
            <person name="Krijgsveld J."/>
            <person name="Heck A.J."/>
            <person name="Mohammed S."/>
        </authorList>
    </citation>
    <scope>ACETYLATION [LARGE SCALE ANALYSIS] AT ALA-2</scope>
    <scope>CLEAVAGE OF INITIATOR METHIONINE [LARGE SCALE ANALYSIS]</scope>
    <scope>IDENTIFICATION BY MASS SPECTROMETRY [LARGE SCALE ANALYSIS]</scope>
</reference>
<reference key="9">
    <citation type="journal article" date="2011" name="BMC Syst. Biol.">
        <title>Initial characterization of the human central proteome.</title>
        <authorList>
            <person name="Burkard T.R."/>
            <person name="Planyavsky M."/>
            <person name="Kaupe I."/>
            <person name="Breitwieser F.P."/>
            <person name="Buerckstuemmer T."/>
            <person name="Bennett K.L."/>
            <person name="Superti-Furga G."/>
            <person name="Colinge J."/>
        </authorList>
    </citation>
    <scope>IDENTIFICATION BY MASS SPECTROMETRY [LARGE SCALE ANALYSIS]</scope>
</reference>
<reference key="10">
    <citation type="journal article" date="2012" name="Mol. Cell. Proteomics">
        <title>Comparative large-scale characterisation of plant vs. mammal proteins reveals similar and idiosyncratic N-alpha acetylation features.</title>
        <authorList>
            <person name="Bienvenut W.V."/>
            <person name="Sumpton D."/>
            <person name="Martinez A."/>
            <person name="Lilla S."/>
            <person name="Espagne C."/>
            <person name="Meinnel T."/>
            <person name="Giglione C."/>
        </authorList>
    </citation>
    <scope>ACETYLATION [LARGE SCALE ANALYSIS] AT ALA-2</scope>
    <scope>CLEAVAGE OF INITIATOR METHIONINE [LARGE SCALE ANALYSIS]</scope>
    <scope>IDENTIFICATION BY MASS SPECTROMETRY [LARGE SCALE ANALYSIS]</scope>
</reference>
<reference key="11">
    <citation type="journal article" date="2014" name="J. Proteomics">
        <title>An enzyme assisted RP-RPLC approach for in-depth analysis of human liver phosphoproteome.</title>
        <authorList>
            <person name="Bian Y."/>
            <person name="Song C."/>
            <person name="Cheng K."/>
            <person name="Dong M."/>
            <person name="Wang F."/>
            <person name="Huang J."/>
            <person name="Sun D."/>
            <person name="Wang L."/>
            <person name="Ye M."/>
            <person name="Zou H."/>
        </authorList>
    </citation>
    <scope>PHOSPHORYLATION [LARGE SCALE ANALYSIS] AT SER-167</scope>
    <scope>IDENTIFICATION BY MASS SPECTROMETRY [LARGE SCALE ANALYSIS]</scope>
    <source>
        <tissue>Liver</tissue>
    </source>
</reference>
<reference key="12">
    <citation type="journal article" date="2022" name="Nat. Chem. Biol.">
        <title>M24B aminopeptidase inhibitors selectively activate the CARD8 inflammasome.</title>
        <authorList>
            <person name="Rao S.D."/>
            <person name="Chen Q."/>
            <person name="Wang Q."/>
            <person name="Orth-He E.L."/>
            <person name="Saoi M."/>
            <person name="Griswold A.R."/>
            <person name="Bhattacharjee A."/>
            <person name="Ball D.P."/>
            <person name="Huang H.C."/>
            <person name="Chui A.J."/>
            <person name="Covelli D.J."/>
            <person name="You S."/>
            <person name="Cross J.R."/>
            <person name="Bachovchin D.A."/>
        </authorList>
    </citation>
    <scope>FUNCTION</scope>
    <scope>CATALYTIC ACTIVITY</scope>
    <scope>ACTIVITY REGULATION</scope>
</reference>
<reference key="13">
    <citation type="submission" date="2009-02" db="PDB data bank">
        <title>Crystal structure of human prolidase: the molecular basis of PD disease.</title>
        <authorList>
            <consortium name="Protein structure factory (PSF)"/>
        </authorList>
    </citation>
    <scope>X-RAY CRYSTALLOGRAPHY (1.82 ANGSTROMS)</scope>
</reference>
<reference evidence="18 19 20 21" key="14">
    <citation type="journal article" date="2017" name="FEBS J.">
        <title>Substrate specificity and reaction mechanism of human prolidase.</title>
        <authorList>
            <person name="Wilk P."/>
            <person name="Uehlein M."/>
            <person name="Kalms J."/>
            <person name="Dobbek H."/>
            <person name="Mueller U."/>
            <person name="Weiss M.S."/>
        </authorList>
    </citation>
    <scope>X-RAY CRYSTALLOGRAPHY (1.48 ANGSTROMS) OF 6-488 IN COMPLEX WITH A DIPEPTIDE AND MANGANESE</scope>
    <scope>COFACTOR</scope>
</reference>
<reference key="15">
    <citation type="journal article" date="1990" name="J. Clin. Invest.">
        <title>A single nucleotide change in the prolidase gene in fibroblasts from two patients with polypeptide positive prolidase deficiency. Expression of the mutant enzyme in NIH 3T3 cells.</title>
        <authorList>
            <person name="Tanoue A."/>
            <person name="Endo F."/>
            <person name="Kitano A."/>
            <person name="Matsuda I."/>
        </authorList>
    </citation>
    <scope>VARIANT PD ASN-276</scope>
</reference>
<reference key="16">
    <citation type="journal article" date="1994" name="Am. J. Hum. Genet.">
        <title>Four novel PEPD alleles causing prolidase deficiency.</title>
        <authorList>
            <person name="Ledoux P."/>
            <person name="Scriver C.R."/>
            <person name="Hechtman P."/>
        </authorList>
    </citation>
    <scope>VARIANTS PD ARG-448 AND GLU-452 DEL</scope>
</reference>
<reference key="17">
    <citation type="journal article" date="1996" name="Am. J. Hum. Genet.">
        <title>Expression and molecular analysis of mutations in prolidase deficiency.</title>
        <authorList>
            <person name="Ledoux P."/>
            <person name="Scriver C.R."/>
            <person name="Hechtman P."/>
        </authorList>
    </citation>
    <scope>VARIANTS PD GLN-184; ASP-278; ARG-448 AND GLU-452 DEL</scope>
</reference>
<reference key="18">
    <citation type="journal article" date="2002" name="Hum. Genet.">
        <title>Mutation analysis of five new patients affected by prolidase deficiency: the lack of enzyme activity causes necrosis-like cell death in cultured fibroblasts.</title>
        <authorList>
            <person name="Forlino A."/>
            <person name="Lupi A."/>
            <person name="Vaghi P."/>
            <person name="Icaro Cornaglia A."/>
            <person name="Calligaro A."/>
            <person name="Campari E."/>
            <person name="Cetta G."/>
        </authorList>
    </citation>
    <scope>VARIANT PD ARG-448</scope>
</reference>
<gene>
    <name evidence="15 17" type="primary">PEPD</name>
    <name type="synonym">PRD</name>
</gene>
<dbReference type="EC" id="3.4.13.9" evidence="5 9"/>
<dbReference type="EMBL" id="J04605">
    <property type="protein sequence ID" value="AAA60064.1"/>
    <property type="molecule type" value="mRNA"/>
</dbReference>
<dbReference type="EMBL" id="BT006692">
    <property type="protein sequence ID" value="AAP35338.1"/>
    <property type="molecule type" value="mRNA"/>
</dbReference>
<dbReference type="EMBL" id="AK290756">
    <property type="protein sequence ID" value="BAF83445.1"/>
    <property type="molecule type" value="mRNA"/>
</dbReference>
<dbReference type="EMBL" id="AK290781">
    <property type="protein sequence ID" value="BAF83470.1"/>
    <property type="molecule type" value="mRNA"/>
</dbReference>
<dbReference type="EMBL" id="AK291561">
    <property type="protein sequence ID" value="BAF84250.1"/>
    <property type="molecule type" value="mRNA"/>
</dbReference>
<dbReference type="EMBL" id="AK293126">
    <property type="protein sequence ID" value="BAG56678.1"/>
    <property type="molecule type" value="mRNA"/>
</dbReference>
<dbReference type="EMBL" id="AK294619">
    <property type="protein sequence ID" value="BAG57802.1"/>
    <property type="molecule type" value="mRNA"/>
</dbReference>
<dbReference type="EMBL" id="AC008744">
    <property type="status" value="NOT_ANNOTATED_CDS"/>
    <property type="molecule type" value="Genomic_DNA"/>
</dbReference>
<dbReference type="EMBL" id="AC010485">
    <property type="status" value="NOT_ANNOTATED_CDS"/>
    <property type="molecule type" value="Genomic_DNA"/>
</dbReference>
<dbReference type="EMBL" id="BC004305">
    <property type="protein sequence ID" value="AAH04305.1"/>
    <property type="molecule type" value="mRNA"/>
</dbReference>
<dbReference type="EMBL" id="BC015027">
    <property type="protein sequence ID" value="AAH15027.1"/>
    <property type="molecule type" value="mRNA"/>
</dbReference>
<dbReference type="EMBL" id="BC028295">
    <property type="protein sequence ID" value="AAH28295.1"/>
    <property type="molecule type" value="mRNA"/>
</dbReference>
<dbReference type="CCDS" id="CCDS42544.1">
    <molecule id="P12955-1"/>
</dbReference>
<dbReference type="CCDS" id="CCDS54244.1">
    <molecule id="P12955-3"/>
</dbReference>
<dbReference type="CCDS" id="CCDS54245.1">
    <molecule id="P12955-2"/>
</dbReference>
<dbReference type="PIR" id="A32454">
    <property type="entry name" value="A32454"/>
</dbReference>
<dbReference type="RefSeq" id="NP_000276.2">
    <molecule id="P12955-1"/>
    <property type="nucleotide sequence ID" value="NM_000285.4"/>
</dbReference>
<dbReference type="RefSeq" id="NP_001159528.1">
    <molecule id="P12955-2"/>
    <property type="nucleotide sequence ID" value="NM_001166056.2"/>
</dbReference>
<dbReference type="RefSeq" id="NP_001159529.1">
    <molecule id="P12955-3"/>
    <property type="nucleotide sequence ID" value="NM_001166057.2"/>
</dbReference>
<dbReference type="PDB" id="2IW2">
    <property type="method" value="X-ray"/>
    <property type="resolution" value="1.82 A"/>
    <property type="chains" value="A/B=2-493"/>
</dbReference>
<dbReference type="PDB" id="2OKN">
    <property type="method" value="X-ray"/>
    <property type="resolution" value="2.45 A"/>
    <property type="chains" value="A/B=2-493"/>
</dbReference>
<dbReference type="PDB" id="5M4G">
    <property type="method" value="X-ray"/>
    <property type="resolution" value="1.48 A"/>
    <property type="chains" value="A/B=6-488"/>
</dbReference>
<dbReference type="PDB" id="5M4J">
    <property type="method" value="X-ray"/>
    <property type="resolution" value="1.55 A"/>
    <property type="chains" value="A/B=6-489"/>
</dbReference>
<dbReference type="PDB" id="5M4L">
    <property type="method" value="X-ray"/>
    <property type="resolution" value="1.49 A"/>
    <property type="chains" value="A/B=6-489"/>
</dbReference>
<dbReference type="PDB" id="5M4Q">
    <property type="method" value="X-ray"/>
    <property type="resolution" value="1.73 A"/>
    <property type="chains" value="A/B=6-489"/>
</dbReference>
<dbReference type="PDB" id="5MBY">
    <property type="method" value="X-ray"/>
    <property type="resolution" value="1.55 A"/>
    <property type="chains" value="A/B=6-490"/>
</dbReference>
<dbReference type="PDB" id="5MBZ">
    <property type="method" value="X-ray"/>
    <property type="resolution" value="1.50 A"/>
    <property type="chains" value="A/B=6-489"/>
</dbReference>
<dbReference type="PDB" id="5MC0">
    <property type="method" value="X-ray"/>
    <property type="resolution" value="1.56 A"/>
    <property type="chains" value="A/B=6-486"/>
</dbReference>
<dbReference type="PDB" id="5MC1">
    <property type="method" value="X-ray"/>
    <property type="resolution" value="1.43 A"/>
    <property type="chains" value="A/B=6-490"/>
</dbReference>
<dbReference type="PDB" id="5MC2">
    <property type="method" value="X-ray"/>
    <property type="resolution" value="1.70 A"/>
    <property type="chains" value="A/B=6-488"/>
</dbReference>
<dbReference type="PDB" id="5MC3">
    <property type="method" value="X-ray"/>
    <property type="resolution" value="1.52 A"/>
    <property type="chains" value="A/B=6-489"/>
</dbReference>
<dbReference type="PDB" id="5MC4">
    <property type="method" value="X-ray"/>
    <property type="resolution" value="1.80 A"/>
    <property type="chains" value="A/B=6-487"/>
</dbReference>
<dbReference type="PDB" id="5MC5">
    <property type="method" value="X-ray"/>
    <property type="resolution" value="1.90 A"/>
    <property type="chains" value="A/B=6-484"/>
</dbReference>
<dbReference type="PDB" id="6H2P">
    <property type="method" value="X-ray"/>
    <property type="resolution" value="1.48 A"/>
    <property type="chains" value="A/B=1-493"/>
</dbReference>
<dbReference type="PDB" id="6H2Q">
    <property type="method" value="X-ray"/>
    <property type="resolution" value="1.78 A"/>
    <property type="chains" value="A/B=1-493"/>
</dbReference>
<dbReference type="PDB" id="6QSB">
    <property type="method" value="X-ray"/>
    <property type="resolution" value="1.99 A"/>
    <property type="chains" value="A/B=1-493"/>
</dbReference>
<dbReference type="PDB" id="6QSC">
    <property type="method" value="X-ray"/>
    <property type="resolution" value="1.57 A"/>
    <property type="chains" value="A/B=1-493"/>
</dbReference>
<dbReference type="PDB" id="6SRE">
    <property type="method" value="X-ray"/>
    <property type="resolution" value="1.39 A"/>
    <property type="chains" value="A/B=6-489"/>
</dbReference>
<dbReference type="PDB" id="6SRF">
    <property type="method" value="X-ray"/>
    <property type="resolution" value="1.85 A"/>
    <property type="chains" value="A/B=6-493"/>
</dbReference>
<dbReference type="PDB" id="6SRG">
    <property type="method" value="X-ray"/>
    <property type="resolution" value="2.56 A"/>
    <property type="chains" value="A/B=1-493"/>
</dbReference>
<dbReference type="PDBsum" id="2IW2"/>
<dbReference type="PDBsum" id="2OKN"/>
<dbReference type="PDBsum" id="5M4G"/>
<dbReference type="PDBsum" id="5M4J"/>
<dbReference type="PDBsum" id="5M4L"/>
<dbReference type="PDBsum" id="5M4Q"/>
<dbReference type="PDBsum" id="5MBY"/>
<dbReference type="PDBsum" id="5MBZ"/>
<dbReference type="PDBsum" id="5MC0"/>
<dbReference type="PDBsum" id="5MC1"/>
<dbReference type="PDBsum" id="5MC2"/>
<dbReference type="PDBsum" id="5MC3"/>
<dbReference type="PDBsum" id="5MC4"/>
<dbReference type="PDBsum" id="5MC5"/>
<dbReference type="PDBsum" id="6H2P"/>
<dbReference type="PDBsum" id="6H2Q"/>
<dbReference type="PDBsum" id="6QSB"/>
<dbReference type="PDBsum" id="6QSC"/>
<dbReference type="PDBsum" id="6SRE"/>
<dbReference type="PDBsum" id="6SRF"/>
<dbReference type="PDBsum" id="6SRG"/>
<dbReference type="SMR" id="P12955"/>
<dbReference type="BioGRID" id="111208">
    <property type="interactions" value="89"/>
</dbReference>
<dbReference type="DIP" id="DIP-50038N"/>
<dbReference type="FunCoup" id="P12955">
    <property type="interactions" value="277"/>
</dbReference>
<dbReference type="IntAct" id="P12955">
    <property type="interactions" value="16"/>
</dbReference>
<dbReference type="STRING" id="9606.ENSP00000244137"/>
<dbReference type="BindingDB" id="P12955"/>
<dbReference type="ChEMBL" id="CHEMBL4185"/>
<dbReference type="MEROPS" id="M24.007"/>
<dbReference type="GlyGen" id="P12955">
    <property type="glycosylation" value="1 site, 1 O-linked glycan (1 site)"/>
</dbReference>
<dbReference type="iPTMnet" id="P12955"/>
<dbReference type="MetOSite" id="P12955"/>
<dbReference type="PhosphoSitePlus" id="P12955"/>
<dbReference type="SwissPalm" id="P12955"/>
<dbReference type="BioMuta" id="PEPD"/>
<dbReference type="DMDM" id="50403718"/>
<dbReference type="REPRODUCTION-2DPAGE" id="IPI00257882"/>
<dbReference type="CPTAC" id="CPTAC-1170"/>
<dbReference type="CPTAC" id="CPTAC-1192"/>
<dbReference type="jPOST" id="P12955"/>
<dbReference type="MassIVE" id="P12955"/>
<dbReference type="PaxDb" id="9606-ENSP00000244137"/>
<dbReference type="PeptideAtlas" id="P12955"/>
<dbReference type="ProteomicsDB" id="19434"/>
<dbReference type="ProteomicsDB" id="52886">
    <molecule id="P12955-1"/>
</dbReference>
<dbReference type="ProteomicsDB" id="52887">
    <molecule id="P12955-2"/>
</dbReference>
<dbReference type="Pumba" id="P12955"/>
<dbReference type="Antibodypedia" id="2792">
    <property type="antibodies" value="256 antibodies from 28 providers"/>
</dbReference>
<dbReference type="DNASU" id="5184"/>
<dbReference type="Ensembl" id="ENST00000244137.12">
    <molecule id="P12955-1"/>
    <property type="protein sequence ID" value="ENSP00000244137.5"/>
    <property type="gene ID" value="ENSG00000124299.16"/>
</dbReference>
<dbReference type="Ensembl" id="ENST00000397032.8">
    <molecule id="P12955-2"/>
    <property type="protein sequence ID" value="ENSP00000380226.3"/>
    <property type="gene ID" value="ENSG00000124299.16"/>
</dbReference>
<dbReference type="Ensembl" id="ENST00000436370.7">
    <molecule id="P12955-3"/>
    <property type="protein sequence ID" value="ENSP00000391890.2"/>
    <property type="gene ID" value="ENSG00000124299.16"/>
</dbReference>
<dbReference type="GeneID" id="5184"/>
<dbReference type="KEGG" id="hsa:5184"/>
<dbReference type="MANE-Select" id="ENST00000244137.12">
    <property type="protein sequence ID" value="ENSP00000244137.5"/>
    <property type="RefSeq nucleotide sequence ID" value="NM_000285.4"/>
    <property type="RefSeq protein sequence ID" value="NP_000276.2"/>
</dbReference>
<dbReference type="UCSC" id="uc002nur.5">
    <molecule id="P12955-1"/>
    <property type="organism name" value="human"/>
</dbReference>
<dbReference type="AGR" id="HGNC:8840"/>
<dbReference type="CTD" id="5184"/>
<dbReference type="DisGeNET" id="5184"/>
<dbReference type="GeneCards" id="PEPD"/>
<dbReference type="GeneReviews" id="PEPD"/>
<dbReference type="HGNC" id="HGNC:8840">
    <property type="gene designation" value="PEPD"/>
</dbReference>
<dbReference type="HPA" id="ENSG00000124299">
    <property type="expression patterns" value="Tissue enhanced (intestine, kidney)"/>
</dbReference>
<dbReference type="MalaCards" id="PEPD"/>
<dbReference type="MIM" id="170100">
    <property type="type" value="phenotype"/>
</dbReference>
<dbReference type="MIM" id="613230">
    <property type="type" value="gene"/>
</dbReference>
<dbReference type="neXtProt" id="NX_P12955"/>
<dbReference type="OpenTargets" id="ENSG00000124299"/>
<dbReference type="Orphanet" id="742">
    <property type="disease" value="Prolidase deficiency"/>
</dbReference>
<dbReference type="PharmGKB" id="PA33181"/>
<dbReference type="VEuPathDB" id="HostDB:ENSG00000124299"/>
<dbReference type="eggNOG" id="KOG2737">
    <property type="taxonomic scope" value="Eukaryota"/>
</dbReference>
<dbReference type="GeneTree" id="ENSGT00940000153657"/>
<dbReference type="HOGENOM" id="CLU_017266_1_2_1"/>
<dbReference type="InParanoid" id="P12955"/>
<dbReference type="OMA" id="DAHALFF"/>
<dbReference type="OrthoDB" id="10261878at2759"/>
<dbReference type="PAN-GO" id="P12955">
    <property type="GO annotations" value="1 GO annotation based on evolutionary models"/>
</dbReference>
<dbReference type="PhylomeDB" id="P12955"/>
<dbReference type="TreeFam" id="TF313396"/>
<dbReference type="BRENDA" id="3.4.13.9">
    <property type="organism ID" value="2681"/>
</dbReference>
<dbReference type="PathwayCommons" id="P12955"/>
<dbReference type="SignaLink" id="P12955"/>
<dbReference type="BioGRID-ORCS" id="5184">
    <property type="hits" value="18 hits in 1159 CRISPR screens"/>
</dbReference>
<dbReference type="CD-CODE" id="DEE660B4">
    <property type="entry name" value="Stress granule"/>
</dbReference>
<dbReference type="ChiTaRS" id="PEPD">
    <property type="organism name" value="human"/>
</dbReference>
<dbReference type="EvolutionaryTrace" id="P12955"/>
<dbReference type="GeneWiki" id="PEPD"/>
<dbReference type="GenomeRNAi" id="5184"/>
<dbReference type="Pharos" id="P12955">
    <property type="development level" value="Tchem"/>
</dbReference>
<dbReference type="PRO" id="PR:P12955"/>
<dbReference type="Proteomes" id="UP000005640">
    <property type="component" value="Chromosome 19"/>
</dbReference>
<dbReference type="RNAct" id="P12955">
    <property type="molecule type" value="protein"/>
</dbReference>
<dbReference type="Bgee" id="ENSG00000124299">
    <property type="expression patterns" value="Expressed in ileal mucosa and 192 other cell types or tissues"/>
</dbReference>
<dbReference type="ExpressionAtlas" id="P12955">
    <property type="expression patterns" value="baseline and differential"/>
</dbReference>
<dbReference type="GO" id="GO:0070062">
    <property type="term" value="C:extracellular exosome"/>
    <property type="evidence" value="ECO:0007005"/>
    <property type="project" value="UniProtKB"/>
</dbReference>
<dbReference type="GO" id="GO:0030145">
    <property type="term" value="F:manganese ion binding"/>
    <property type="evidence" value="ECO:0007669"/>
    <property type="project" value="InterPro"/>
</dbReference>
<dbReference type="GO" id="GO:0070006">
    <property type="term" value="F:metalloaminopeptidase activity"/>
    <property type="evidence" value="ECO:0007669"/>
    <property type="project" value="InterPro"/>
</dbReference>
<dbReference type="GO" id="GO:0004181">
    <property type="term" value="F:metallocarboxypeptidase activity"/>
    <property type="evidence" value="ECO:0000304"/>
    <property type="project" value="ProtInc"/>
</dbReference>
<dbReference type="GO" id="GO:0008233">
    <property type="term" value="F:peptidase activity"/>
    <property type="evidence" value="ECO:0000318"/>
    <property type="project" value="GO_Central"/>
</dbReference>
<dbReference type="GO" id="GO:0102009">
    <property type="term" value="F:proline dipeptidase activity"/>
    <property type="evidence" value="ECO:0000314"/>
    <property type="project" value="UniProtKB"/>
</dbReference>
<dbReference type="GO" id="GO:0006520">
    <property type="term" value="P:amino acid metabolic process"/>
    <property type="evidence" value="ECO:0000304"/>
    <property type="project" value="ProtInc"/>
</dbReference>
<dbReference type="GO" id="GO:0030574">
    <property type="term" value="P:collagen catabolic process"/>
    <property type="evidence" value="ECO:0007669"/>
    <property type="project" value="UniProtKB-KW"/>
</dbReference>
<dbReference type="GO" id="GO:0043069">
    <property type="term" value="P:negative regulation of programmed cell death"/>
    <property type="evidence" value="ECO:0000314"/>
    <property type="project" value="UniProtKB"/>
</dbReference>
<dbReference type="GO" id="GO:0006508">
    <property type="term" value="P:proteolysis"/>
    <property type="evidence" value="ECO:0000314"/>
    <property type="project" value="UniProtKB"/>
</dbReference>
<dbReference type="CDD" id="cd01087">
    <property type="entry name" value="Prolidase"/>
    <property type="match status" value="1"/>
</dbReference>
<dbReference type="FunFam" id="3.90.230.10:FF:000002">
    <property type="entry name" value="Xaa-Pro aminopeptidase 3"/>
    <property type="match status" value="1"/>
</dbReference>
<dbReference type="FunFam" id="3.40.350.10:FF:000007">
    <property type="entry name" value="Xaa-Pro dipeptidase"/>
    <property type="match status" value="1"/>
</dbReference>
<dbReference type="Gene3D" id="3.90.230.10">
    <property type="entry name" value="Creatinase/methionine aminopeptidase superfamily"/>
    <property type="match status" value="1"/>
</dbReference>
<dbReference type="Gene3D" id="3.40.350.10">
    <property type="entry name" value="Creatinase/prolidase N-terminal domain"/>
    <property type="match status" value="1"/>
</dbReference>
<dbReference type="InterPro" id="IPR007865">
    <property type="entry name" value="Aminopep_P_N"/>
</dbReference>
<dbReference type="InterPro" id="IPR029149">
    <property type="entry name" value="Creatin/AminoP/Spt16_N"/>
</dbReference>
<dbReference type="InterPro" id="IPR036005">
    <property type="entry name" value="Creatinase/aminopeptidase-like"/>
</dbReference>
<dbReference type="InterPro" id="IPR000994">
    <property type="entry name" value="Pept_M24"/>
</dbReference>
<dbReference type="InterPro" id="IPR001131">
    <property type="entry name" value="Peptidase_M24B_aminopep-P_CS"/>
</dbReference>
<dbReference type="InterPro" id="IPR052433">
    <property type="entry name" value="X-Pro_dipept-like"/>
</dbReference>
<dbReference type="PANTHER" id="PTHR48480">
    <property type="match status" value="1"/>
</dbReference>
<dbReference type="PANTHER" id="PTHR48480:SF2">
    <property type="entry name" value="PEPTIDASE D"/>
    <property type="match status" value="1"/>
</dbReference>
<dbReference type="Pfam" id="PF05195">
    <property type="entry name" value="AMP_N"/>
    <property type="match status" value="1"/>
</dbReference>
<dbReference type="Pfam" id="PF00557">
    <property type="entry name" value="Peptidase_M24"/>
    <property type="match status" value="1"/>
</dbReference>
<dbReference type="SMART" id="SM01011">
    <property type="entry name" value="AMP_N"/>
    <property type="match status" value="1"/>
</dbReference>
<dbReference type="SUPFAM" id="SSF55920">
    <property type="entry name" value="Creatinase/aminopeptidase"/>
    <property type="match status" value="1"/>
</dbReference>
<dbReference type="SUPFAM" id="SSF53092">
    <property type="entry name" value="Creatinase/prolidase N-terminal domain"/>
    <property type="match status" value="1"/>
</dbReference>
<dbReference type="PROSITE" id="PS00491">
    <property type="entry name" value="PROLINE_PEPTIDASE"/>
    <property type="match status" value="1"/>
</dbReference>
<feature type="initiator methionine" description="Removed" evidence="22 23">
    <location>
        <position position="1"/>
    </location>
</feature>
<feature type="chain" id="PRO_0000185087" description="Xaa-Pro dipeptidase">
    <location>
        <begin position="2"/>
        <end position="493"/>
    </location>
</feature>
<feature type="binding site" evidence="7 19 20">
    <location>
        <position position="255"/>
    </location>
    <ligand>
        <name>a dipeptide</name>
        <dbReference type="ChEBI" id="CHEBI:90799"/>
    </ligand>
</feature>
<feature type="binding site" evidence="7 18 20 21">
    <location>
        <position position="276"/>
    </location>
    <ligand>
        <name>Mn(2+)</name>
        <dbReference type="ChEBI" id="CHEBI:29035"/>
        <label>1</label>
    </ligand>
</feature>
<feature type="binding site" evidence="7 19 20">
    <location>
        <position position="287"/>
    </location>
    <ligand>
        <name>a dipeptide</name>
        <dbReference type="ChEBI" id="CHEBI:90799"/>
    </ligand>
</feature>
<feature type="binding site" evidence="7 18 20 21">
    <location>
        <position position="287"/>
    </location>
    <ligand>
        <name>Mn(2+)</name>
        <dbReference type="ChEBI" id="CHEBI:29035"/>
        <label>1</label>
    </ligand>
</feature>
<feature type="binding site" evidence="7 18 20 21">
    <location>
        <position position="287"/>
    </location>
    <ligand>
        <name>Mn(2+)</name>
        <dbReference type="ChEBI" id="CHEBI:29035"/>
        <label>2</label>
    </ligand>
</feature>
<feature type="binding site" evidence="7 18 20 21">
    <location>
        <position position="370"/>
    </location>
    <ligand>
        <name>Mn(2+)</name>
        <dbReference type="ChEBI" id="CHEBI:29035"/>
        <label>2</label>
    </ligand>
</feature>
<feature type="binding site" evidence="7 19 20">
    <location>
        <position position="377"/>
    </location>
    <ligand>
        <name>a dipeptide</name>
        <dbReference type="ChEBI" id="CHEBI:90799"/>
    </ligand>
</feature>
<feature type="binding site" evidence="7 19 20">
    <location>
        <position position="398"/>
    </location>
    <ligand>
        <name>a dipeptide</name>
        <dbReference type="ChEBI" id="CHEBI:90799"/>
    </ligand>
</feature>
<feature type="binding site" evidence="7 18 20 21">
    <location>
        <position position="412"/>
    </location>
    <ligand>
        <name>Mn(2+)</name>
        <dbReference type="ChEBI" id="CHEBI:29035"/>
        <label>2</label>
    </ligand>
</feature>
<feature type="binding site" evidence="7 18 20 21">
    <location>
        <position position="452"/>
    </location>
    <ligand>
        <name>Mn(2+)</name>
        <dbReference type="ChEBI" id="CHEBI:29035"/>
        <label>1</label>
    </ligand>
</feature>
<feature type="binding site" evidence="7 18 20 21">
    <location>
        <position position="452"/>
    </location>
    <ligand>
        <name>Mn(2+)</name>
        <dbReference type="ChEBI" id="CHEBI:29035"/>
        <label>2</label>
    </ligand>
</feature>
<feature type="modified residue" description="N-acetylalanine" evidence="22 23">
    <location>
        <position position="2"/>
    </location>
</feature>
<feature type="modified residue" description="Phosphoserine" evidence="24">
    <location>
        <position position="167"/>
    </location>
</feature>
<feature type="splice variant" id="VSP_045370" description="In isoform 3." evidence="13">
    <location>
        <begin position="68"/>
        <end position="131"/>
    </location>
</feature>
<feature type="splice variant" id="VSP_042629" description="In isoform 2." evidence="13">
    <location>
        <begin position="184"/>
        <end position="224"/>
    </location>
</feature>
<feature type="sequence variant" id="VAR_011614" description="In PD; dbSNP:rs121917722." evidence="11">
    <original>R</original>
    <variation>Q</variation>
    <location>
        <position position="184"/>
    </location>
</feature>
<feature type="sequence variant" id="VAR_004404" description="In PD; dbSNP:rs121917721." evidence="6">
    <original>D</original>
    <variation>N</variation>
    <location>
        <position position="276"/>
    </location>
</feature>
<feature type="sequence variant" id="VAR_011615" description="In PD; dbSNP:rs121917723." evidence="11">
    <original>G</original>
    <variation>D</variation>
    <location>
        <position position="278"/>
    </location>
</feature>
<feature type="sequence variant" id="VAR_051574" description="In dbSNP:rs2230062.">
    <original>R</original>
    <variation>H</variation>
    <location>
        <position position="388"/>
    </location>
</feature>
<feature type="sequence variant" id="VAR_014723" description="In dbSNP:rs17570." evidence="3 4">
    <original>L</original>
    <variation>F</variation>
    <location>
        <position position="435"/>
    </location>
</feature>
<feature type="sequence variant" id="VAR_004405" description="In PD; dbSNP:rs121917724." evidence="2 10 11">
    <original>G</original>
    <variation>R</variation>
    <location>
        <position position="448"/>
    </location>
</feature>
<feature type="sequence variant" id="VAR_004406" description="In PD; dbSNP:rs757386104." evidence="10 11">
    <location>
        <position position="452"/>
    </location>
</feature>
<feature type="sequence conflict" description="In Ref. 3; BAF84250." evidence="16" ref="3">
    <original>L</original>
    <variation>R</variation>
    <location>
        <position position="48"/>
    </location>
</feature>
<feature type="sequence conflict" description="In Ref. 1; AAA60064." evidence="16" ref="1">
    <original>R</original>
    <variation>L</variation>
    <location>
        <position position="66"/>
    </location>
</feature>
<feature type="sequence conflict" description="In Ref. 3; BAF83470." evidence="16" ref="3">
    <original>W</original>
    <variation>R</variation>
    <location>
        <position position="107"/>
    </location>
</feature>
<feature type="sequence conflict" description="In Ref. 3; BAF83445." evidence="16" ref="3">
    <original>M</original>
    <variation>I</variation>
    <location>
        <position position="108"/>
    </location>
</feature>
<feature type="sequence conflict" description="In Ref. 1; AAA60064." evidence="16" ref="1">
    <original>C</original>
    <variation>S</variation>
    <location>
        <position position="183"/>
    </location>
</feature>
<feature type="sequence conflict" description="In Ref. 1; AAA60064." evidence="16" ref="1">
    <original>E</original>
    <variation>G</variation>
    <location>
        <position position="221"/>
    </location>
</feature>
<feature type="sequence conflict" description="In Ref. 1; AAA60064." evidence="16" ref="1">
    <original>CF</original>
    <variation>SV</variation>
    <location>
        <begin position="283"/>
        <end position="284"/>
    </location>
</feature>
<feature type="sequence conflict" description="In Ref. 1; AAA60064." evidence="16" ref="1">
    <original>A</original>
    <variation>R</variation>
    <location>
        <position position="294"/>
    </location>
</feature>
<feature type="sequence conflict" description="In Ref. 1; AAA60064." evidence="16" ref="1">
    <original>R</original>
    <variation>L</variation>
    <location>
        <position position="311"/>
    </location>
</feature>
<feature type="sequence conflict" description="In Ref. 1; AAA60064." evidence="16" ref="1">
    <original>V</original>
    <variation>D</variation>
    <location>
        <position position="324"/>
    </location>
</feature>
<feature type="sequence conflict" description="In Ref. 1; AAA60064." evidence="16" ref="1">
    <original>MH</original>
    <variation>ID</variation>
    <location>
        <begin position="329"/>
        <end position="330"/>
    </location>
</feature>
<feature type="sequence conflict" description="In Ref. 3; BAG56678." evidence="16" ref="3">
    <original>V</original>
    <variation>A</variation>
    <location>
        <position position="408"/>
    </location>
</feature>
<feature type="sequence conflict" description="In Ref. 1; AAA60064." evidence="16" ref="1">
    <original>T</original>
    <variation>I</variation>
    <location>
        <position position="458"/>
    </location>
</feature>
<feature type="sequence conflict" description="In Ref. 3; BAF83470." evidence="16" ref="3">
    <original>C</original>
    <variation>R</variation>
    <location>
        <position position="478"/>
    </location>
</feature>
<feature type="helix" evidence="28">
    <location>
        <begin position="21"/>
        <end position="35"/>
    </location>
</feature>
<feature type="strand" evidence="28">
    <location>
        <begin position="45"/>
        <end position="49"/>
    </location>
</feature>
<feature type="strand" evidence="27">
    <location>
        <begin position="54"/>
        <end position="56"/>
    </location>
</feature>
<feature type="helix" evidence="28">
    <location>
        <begin position="69"/>
        <end position="75"/>
    </location>
</feature>
<feature type="strand" evidence="26">
    <location>
        <begin position="79"/>
        <end position="81"/>
    </location>
</feature>
<feature type="strand" evidence="28">
    <location>
        <begin position="83"/>
        <end position="87"/>
    </location>
</feature>
<feature type="turn" evidence="28">
    <location>
        <begin position="88"/>
        <end position="90"/>
    </location>
</feature>
<feature type="strand" evidence="28">
    <location>
        <begin position="93"/>
        <end position="97"/>
    </location>
</feature>
<feature type="helix" evidence="28">
    <location>
        <begin position="104"/>
        <end position="107"/>
    </location>
</feature>
<feature type="helix" evidence="28">
    <location>
        <begin position="114"/>
        <end position="121"/>
    </location>
</feature>
<feature type="strand" evidence="28">
    <location>
        <begin position="124"/>
        <end position="128"/>
    </location>
</feature>
<feature type="helix" evidence="28">
    <location>
        <begin position="129"/>
        <end position="131"/>
    </location>
</feature>
<feature type="helix" evidence="28">
    <location>
        <begin position="132"/>
        <end position="139"/>
    </location>
</feature>
<feature type="strand" evidence="25">
    <location>
        <begin position="142"/>
        <end position="145"/>
    </location>
</feature>
<feature type="turn" evidence="28">
    <location>
        <begin position="152"/>
        <end position="154"/>
    </location>
</feature>
<feature type="helix" evidence="28">
    <location>
        <begin position="166"/>
        <end position="168"/>
    </location>
</feature>
<feature type="helix" evidence="28">
    <location>
        <begin position="176"/>
        <end position="185"/>
    </location>
</feature>
<feature type="helix" evidence="28">
    <location>
        <begin position="189"/>
        <end position="212"/>
    </location>
</feature>
<feature type="helix" evidence="28">
    <location>
        <begin position="219"/>
        <end position="234"/>
    </location>
</feature>
<feature type="strand" evidence="27">
    <location>
        <begin position="238"/>
        <end position="241"/>
    </location>
</feature>
<feature type="strand" evidence="28">
    <location>
        <begin position="244"/>
        <end position="247"/>
    </location>
</feature>
<feature type="helix" evidence="28">
    <location>
        <begin position="248"/>
        <end position="252"/>
    </location>
</feature>
<feature type="turn" evidence="28">
    <location>
        <begin position="254"/>
        <end position="257"/>
    </location>
</feature>
<feature type="strand" evidence="28">
    <location>
        <begin position="272"/>
        <end position="281"/>
    </location>
</feature>
<feature type="strand" evidence="28">
    <location>
        <begin position="284"/>
        <end position="293"/>
    </location>
</feature>
<feature type="helix" evidence="28">
    <location>
        <begin position="300"/>
        <end position="319"/>
    </location>
</feature>
<feature type="helix" evidence="28">
    <location>
        <begin position="326"/>
        <end position="343"/>
    </location>
</feature>
<feature type="helix" evidence="28">
    <location>
        <begin position="351"/>
        <end position="356"/>
    </location>
</feature>
<feature type="turn" evidence="28">
    <location>
        <begin position="357"/>
        <end position="359"/>
    </location>
</feature>
<feature type="helix" evidence="28">
    <location>
        <begin position="360"/>
        <end position="363"/>
    </location>
</feature>
<feature type="strand" evidence="28">
    <location>
        <begin position="373"/>
        <end position="377"/>
    </location>
</feature>
<feature type="helix" evidence="28">
    <location>
        <begin position="394"/>
        <end position="396"/>
    </location>
</feature>
<feature type="strand" evidence="28">
    <location>
        <begin position="408"/>
        <end position="411"/>
    </location>
</feature>
<feature type="strand" evidence="28">
    <location>
        <begin position="414"/>
        <end position="416"/>
    </location>
</feature>
<feature type="helix" evidence="28">
    <location>
        <begin position="419"/>
        <end position="427"/>
    </location>
</feature>
<feature type="helix" evidence="28">
    <location>
        <begin position="429"/>
        <end position="432"/>
    </location>
</feature>
<feature type="helix" evidence="28">
    <location>
        <begin position="437"/>
        <end position="441"/>
    </location>
</feature>
<feature type="turn" evidence="28">
    <location>
        <begin position="442"/>
        <end position="445"/>
    </location>
</feature>
<feature type="strand" evidence="28">
    <location>
        <begin position="448"/>
        <end position="450"/>
    </location>
</feature>
<feature type="strand" evidence="28">
    <location>
        <begin position="452"/>
        <end position="457"/>
    </location>
</feature>
<feature type="strand" evidence="28">
    <location>
        <begin position="459"/>
        <end position="464"/>
    </location>
</feature>
<feature type="helix" evidence="28">
    <location>
        <begin position="472"/>
        <end position="480"/>
    </location>
</feature>
<keyword id="KW-0002">3D-structure</keyword>
<keyword id="KW-0007">Acetylation</keyword>
<keyword id="KW-0025">Alternative splicing</keyword>
<keyword id="KW-0177">Collagen degradation</keyword>
<keyword id="KW-0224">Dipeptidase</keyword>
<keyword id="KW-0903">Direct protein sequencing</keyword>
<keyword id="KW-0225">Disease variant</keyword>
<keyword id="KW-0378">Hydrolase</keyword>
<keyword id="KW-0464">Manganese</keyword>
<keyword id="KW-0479">Metal-binding</keyword>
<keyword id="KW-0482">Metalloprotease</keyword>
<keyword id="KW-0597">Phosphoprotein</keyword>
<keyword id="KW-0645">Protease</keyword>
<keyword id="KW-1267">Proteomics identification</keyword>
<keyword id="KW-1185">Reference proteome</keyword>
<comment type="function">
    <text evidence="5 8 9">Dipeptidase that catalyzes the hydrolysis of dipeptides with a prolyl (Xaa-Pro) or hydroxyprolyl residue in the C-terminal position (PubMed:17081196, PubMed:35165443). The preferred dipeptide substrate is Gly-Pro, but other Xaa-Pro dipeptides, such as Ala-Pro, Met-Pro, Phe-Pro, Val-Pro and Leu-Pro, can be cleaved (PubMed:17081196). Plays an important role in collagen metabolism because the high level of iminoacids in collagen (PubMed:2925654).</text>
</comment>
<comment type="catalytic activity">
    <reaction evidence="5 9">
        <text>Xaa-L-Pro dipeptide + H2O = an L-alpha-amino acid + L-proline</text>
        <dbReference type="Rhea" id="RHEA:76407"/>
        <dbReference type="ChEBI" id="CHEBI:15377"/>
        <dbReference type="ChEBI" id="CHEBI:59869"/>
        <dbReference type="ChEBI" id="CHEBI:60039"/>
        <dbReference type="ChEBI" id="CHEBI:195196"/>
        <dbReference type="EC" id="3.4.13.9"/>
    </reaction>
</comment>
<comment type="cofactor">
    <cofactor evidence="5 7">
        <name>Mn(2+)</name>
        <dbReference type="ChEBI" id="CHEBI:29035"/>
    </cofactor>
    <text evidence="7">Binds 2 manganese ions per subunit.</text>
</comment>
<comment type="activity regulation">
    <text evidence="9">Specifically inhibited by the pseudodipeptide CQ31 (PubMed:35165443). Inhibition by CQ31 indirectly activates the CARD8 inflammasome: dipeptide accumulation following PEPD inactivation weaky inhibit dipeptidyl peptidases DDP8 and DPP9, relieving DPP8- and/or DPP9-mediated inhibition of CARD8 (PubMed:35165443).</text>
</comment>
<comment type="subunit">
    <text evidence="7 12">Homodimer.</text>
</comment>
<comment type="interaction">
    <interactant intactId="EBI-948765">
        <id>P12955</id>
    </interactant>
    <interactant intactId="EBI-930964">
        <id>P54253</id>
        <label>ATXN1</label>
    </interactant>
    <organismsDiffer>false</organismsDiffer>
    <experiments>4</experiments>
</comment>
<comment type="interaction">
    <interactant intactId="EBI-948765">
        <id>P12955</id>
    </interactant>
    <interactant intactId="EBI-710997">
        <id>P54274</id>
        <label>TERF1</label>
    </interactant>
    <organismsDiffer>false</organismsDiffer>
    <experiments>2</experiments>
</comment>
<comment type="alternative products">
    <event type="alternative splicing"/>
    <isoform>
        <id>P12955-1</id>
        <name>1</name>
        <sequence type="displayed"/>
    </isoform>
    <isoform>
        <id>P12955-2</id>
        <name>2</name>
        <sequence type="described" ref="VSP_042629"/>
    </isoform>
    <isoform>
        <id>P12955-3</id>
        <name>3</name>
        <sequence type="described" ref="VSP_045370"/>
    </isoform>
</comment>
<comment type="mass spectrometry"/>
<comment type="disease" evidence="2 6 10 11">
    <disease id="DI-02218">
        <name>Prolidase deficiency</name>
        <acronym>PD</acronym>
        <description>A multisystem disorder associated with massive iminodipeptiduria and lack of or reduced prolidase activity in erythrocytes, leukocytes, or cultured fibroblasts. Clinical features include skin ulcers, developmental delay, recurrent infections, and a characteristic facies.</description>
        <dbReference type="MIM" id="170100"/>
    </disease>
    <text>The disease is caused by variants affecting the gene represented in this entry.</text>
</comment>
<comment type="similarity">
    <text evidence="16">Belongs to the peptidase M24B family. Eukaryotic-type prolidase subfamily.</text>
</comment>
<protein>
    <recommendedName>
        <fullName>Xaa-Pro dipeptidase</fullName>
        <shortName>X-Pro dipeptidase</shortName>
        <ecNumber evidence="5 9">3.4.13.9</ecNumber>
    </recommendedName>
    <alternativeName>
        <fullName>Imidodipeptidase</fullName>
    </alternativeName>
    <alternativeName>
        <fullName>Peptidase D</fullName>
    </alternativeName>
    <alternativeName>
        <fullName evidence="14">Proline dipeptidase</fullName>
        <shortName evidence="14">Prolidase</shortName>
    </alternativeName>
</protein>